<name>YCIB_DECAR</name>
<keyword id="KW-0997">Cell inner membrane</keyword>
<keyword id="KW-1003">Cell membrane</keyword>
<keyword id="KW-0472">Membrane</keyword>
<keyword id="KW-0812">Transmembrane</keyword>
<keyword id="KW-1133">Transmembrane helix</keyword>
<organism>
    <name type="scientific">Dechloromonas aromatica (strain RCB)</name>
    <dbReference type="NCBI Taxonomy" id="159087"/>
    <lineage>
        <taxon>Bacteria</taxon>
        <taxon>Pseudomonadati</taxon>
        <taxon>Pseudomonadota</taxon>
        <taxon>Betaproteobacteria</taxon>
        <taxon>Rhodocyclales</taxon>
        <taxon>Azonexaceae</taxon>
        <taxon>Dechloromonas</taxon>
    </lineage>
</organism>
<comment type="function">
    <text evidence="1">Plays a role in cell envelope biogenesis, maintenance of cell envelope integrity and membrane homeostasis.</text>
</comment>
<comment type="subcellular location">
    <subcellularLocation>
        <location evidence="1">Cell inner membrane</location>
        <topology evidence="1">Multi-pass membrane protein</topology>
    </subcellularLocation>
</comment>
<comment type="similarity">
    <text evidence="1">Belongs to the YciB family.</text>
</comment>
<protein>
    <recommendedName>
        <fullName evidence="1">Inner membrane-spanning protein YciB</fullName>
    </recommendedName>
</protein>
<feature type="chain" id="PRO_1000021008" description="Inner membrane-spanning protein YciB">
    <location>
        <begin position="1"/>
        <end position="202"/>
    </location>
</feature>
<feature type="transmembrane region" description="Helical" evidence="1">
    <location>
        <begin position="47"/>
        <end position="67"/>
    </location>
</feature>
<feature type="transmembrane region" description="Helical" evidence="1">
    <location>
        <begin position="75"/>
        <end position="95"/>
    </location>
</feature>
<feature type="transmembrane region" description="Helical" evidence="1">
    <location>
        <begin position="101"/>
        <end position="121"/>
    </location>
</feature>
<feature type="transmembrane region" description="Helical" evidence="1">
    <location>
        <begin position="146"/>
        <end position="166"/>
    </location>
</feature>
<feature type="transmembrane region" description="Helical" evidence="1">
    <location>
        <begin position="174"/>
        <end position="194"/>
    </location>
</feature>
<proteinExistence type="inferred from homology"/>
<gene>
    <name evidence="1" type="primary">yciB</name>
    <name type="ordered locus">Daro_2903</name>
</gene>
<evidence type="ECO:0000255" key="1">
    <source>
        <dbReference type="HAMAP-Rule" id="MF_00189"/>
    </source>
</evidence>
<sequence>MKLLFDLFPVILFFATFKYAEKSPELAASWMGSLLGFVPDDIKLAPILLATVVVIAATVAQIIWVHFRHGKVDKMLWVSLVLVVVFGGLTLAFQNEAFIKWKPTILYWVFAGSMIFSAFILKKNPIKAMLGEQLTLPEPVWGKVNLSWIGFFLFMGALNLFVAFNFPTDTWVNFKLFGGMGLMLVFVLGQGMLLSKYVEEEK</sequence>
<dbReference type="EMBL" id="CP000089">
    <property type="protein sequence ID" value="AAZ47633.1"/>
    <property type="molecule type" value="Genomic_DNA"/>
</dbReference>
<dbReference type="STRING" id="159087.Daro_2903"/>
<dbReference type="KEGG" id="dar:Daro_2903"/>
<dbReference type="eggNOG" id="COG2917">
    <property type="taxonomic scope" value="Bacteria"/>
</dbReference>
<dbReference type="HOGENOM" id="CLU_089554_2_0_4"/>
<dbReference type="OrthoDB" id="9788219at2"/>
<dbReference type="GO" id="GO:0005886">
    <property type="term" value="C:plasma membrane"/>
    <property type="evidence" value="ECO:0007669"/>
    <property type="project" value="UniProtKB-SubCell"/>
</dbReference>
<dbReference type="HAMAP" id="MF_00189">
    <property type="entry name" value="YciB"/>
    <property type="match status" value="1"/>
</dbReference>
<dbReference type="InterPro" id="IPR006008">
    <property type="entry name" value="YciB"/>
</dbReference>
<dbReference type="NCBIfam" id="TIGR00997">
    <property type="entry name" value="ispZ"/>
    <property type="match status" value="1"/>
</dbReference>
<dbReference type="NCBIfam" id="NF001325">
    <property type="entry name" value="PRK00259.1-3"/>
    <property type="match status" value="1"/>
</dbReference>
<dbReference type="PANTHER" id="PTHR36917:SF1">
    <property type="entry name" value="INNER MEMBRANE-SPANNING PROTEIN YCIB"/>
    <property type="match status" value="1"/>
</dbReference>
<dbReference type="PANTHER" id="PTHR36917">
    <property type="entry name" value="INTRACELLULAR SEPTATION PROTEIN A-RELATED"/>
    <property type="match status" value="1"/>
</dbReference>
<dbReference type="Pfam" id="PF04279">
    <property type="entry name" value="IspA"/>
    <property type="match status" value="1"/>
</dbReference>
<reference key="1">
    <citation type="journal article" date="2009" name="BMC Genomics">
        <title>Metabolic analysis of the soil microbe Dechloromonas aromatica str. RCB: indications of a surprisingly complex life-style and cryptic anaerobic pathways for aromatic degradation.</title>
        <authorList>
            <person name="Salinero K.K."/>
            <person name="Keller K."/>
            <person name="Feil W.S."/>
            <person name="Feil H."/>
            <person name="Trong S."/>
            <person name="Di Bartolo G."/>
            <person name="Lapidus A."/>
        </authorList>
    </citation>
    <scope>NUCLEOTIDE SEQUENCE [LARGE SCALE GENOMIC DNA]</scope>
    <source>
        <strain>RCB</strain>
    </source>
</reference>
<accession>Q47BZ8</accession>